<comment type="function">
    <text evidence="1">Catalyzes the conversion of dihydroorotate to orotate with quinone as electron acceptor.</text>
</comment>
<comment type="catalytic activity">
    <reaction evidence="1">
        <text>(S)-dihydroorotate + a quinone = orotate + a quinol</text>
        <dbReference type="Rhea" id="RHEA:30187"/>
        <dbReference type="ChEBI" id="CHEBI:24646"/>
        <dbReference type="ChEBI" id="CHEBI:30839"/>
        <dbReference type="ChEBI" id="CHEBI:30864"/>
        <dbReference type="ChEBI" id="CHEBI:132124"/>
        <dbReference type="EC" id="1.3.5.2"/>
    </reaction>
</comment>
<comment type="cofactor">
    <cofactor evidence="1">
        <name>FMN</name>
        <dbReference type="ChEBI" id="CHEBI:58210"/>
    </cofactor>
    <text evidence="1">Binds 1 FMN per subunit.</text>
</comment>
<comment type="pathway">
    <text evidence="1">Pyrimidine metabolism; UMP biosynthesis via de novo pathway; orotate from (S)-dihydroorotate (quinone route): step 1/1.</text>
</comment>
<comment type="subunit">
    <text evidence="1">Monomer.</text>
</comment>
<comment type="subcellular location">
    <subcellularLocation>
        <location evidence="1">Cell membrane</location>
        <topology evidence="1">Peripheral membrane protein</topology>
    </subcellularLocation>
</comment>
<comment type="similarity">
    <text evidence="1">Belongs to the dihydroorotate dehydrogenase family. Type 2 subfamily.</text>
</comment>
<evidence type="ECO:0000255" key="1">
    <source>
        <dbReference type="HAMAP-Rule" id="MF_00225"/>
    </source>
</evidence>
<keyword id="KW-1003">Cell membrane</keyword>
<keyword id="KW-0285">Flavoprotein</keyword>
<keyword id="KW-0288">FMN</keyword>
<keyword id="KW-0472">Membrane</keyword>
<keyword id="KW-0560">Oxidoreductase</keyword>
<keyword id="KW-0665">Pyrimidine biosynthesis</keyword>
<keyword id="KW-1185">Reference proteome</keyword>
<name>PYRD_HERAR</name>
<organism>
    <name type="scientific">Herminiimonas arsenicoxydans</name>
    <dbReference type="NCBI Taxonomy" id="204773"/>
    <lineage>
        <taxon>Bacteria</taxon>
        <taxon>Pseudomonadati</taxon>
        <taxon>Pseudomonadota</taxon>
        <taxon>Betaproteobacteria</taxon>
        <taxon>Burkholderiales</taxon>
        <taxon>Oxalobacteraceae</taxon>
        <taxon>Herminiimonas</taxon>
    </lineage>
</organism>
<reference key="1">
    <citation type="journal article" date="2007" name="PLoS Genet.">
        <title>A tale of two oxidation states: bacterial colonization of arsenic-rich environments.</title>
        <authorList>
            <person name="Muller D."/>
            <person name="Medigue C."/>
            <person name="Koechler S."/>
            <person name="Barbe V."/>
            <person name="Barakat M."/>
            <person name="Talla E."/>
            <person name="Bonnefoy V."/>
            <person name="Krin E."/>
            <person name="Arsene-Ploetze F."/>
            <person name="Carapito C."/>
            <person name="Chandler M."/>
            <person name="Cournoyer B."/>
            <person name="Cruveiller S."/>
            <person name="Dossat C."/>
            <person name="Duval S."/>
            <person name="Heymann M."/>
            <person name="Leize E."/>
            <person name="Lieutaud A."/>
            <person name="Lievremont D."/>
            <person name="Makita Y."/>
            <person name="Mangenot S."/>
            <person name="Nitschke W."/>
            <person name="Ortet P."/>
            <person name="Perdrial N."/>
            <person name="Schoepp B."/>
            <person name="Siguier P."/>
            <person name="Simeonova D.D."/>
            <person name="Rouy Z."/>
            <person name="Segurens B."/>
            <person name="Turlin E."/>
            <person name="Vallenet D."/>
            <person name="van Dorsselaer A."/>
            <person name="Weiss S."/>
            <person name="Weissenbach J."/>
            <person name="Lett M.-C."/>
            <person name="Danchin A."/>
            <person name="Bertin P.N."/>
        </authorList>
    </citation>
    <scope>NUCLEOTIDE SEQUENCE [LARGE SCALE GENOMIC DNA]</scope>
    <source>
        <strain>ULPAs1</strain>
    </source>
</reference>
<feature type="chain" id="PRO_0000336470" description="Dihydroorotate dehydrogenase (quinone)">
    <location>
        <begin position="1"/>
        <end position="347"/>
    </location>
</feature>
<feature type="active site" description="Nucleophile" evidence="1">
    <location>
        <position position="182"/>
    </location>
</feature>
<feature type="binding site" evidence="1">
    <location>
        <begin position="65"/>
        <end position="69"/>
    </location>
    <ligand>
        <name>FMN</name>
        <dbReference type="ChEBI" id="CHEBI:58210"/>
    </ligand>
</feature>
<feature type="binding site" evidence="1">
    <location>
        <position position="69"/>
    </location>
    <ligand>
        <name>substrate</name>
    </ligand>
</feature>
<feature type="binding site" evidence="1">
    <location>
        <position position="89"/>
    </location>
    <ligand>
        <name>FMN</name>
        <dbReference type="ChEBI" id="CHEBI:58210"/>
    </ligand>
</feature>
<feature type="binding site" evidence="1">
    <location>
        <begin position="114"/>
        <end position="118"/>
    </location>
    <ligand>
        <name>substrate</name>
    </ligand>
</feature>
<feature type="binding site" evidence="1">
    <location>
        <position position="146"/>
    </location>
    <ligand>
        <name>FMN</name>
        <dbReference type="ChEBI" id="CHEBI:58210"/>
    </ligand>
</feature>
<feature type="binding site" evidence="1">
    <location>
        <position position="179"/>
    </location>
    <ligand>
        <name>FMN</name>
        <dbReference type="ChEBI" id="CHEBI:58210"/>
    </ligand>
</feature>
<feature type="binding site" evidence="1">
    <location>
        <position position="179"/>
    </location>
    <ligand>
        <name>substrate</name>
    </ligand>
</feature>
<feature type="binding site" evidence="1">
    <location>
        <position position="184"/>
    </location>
    <ligand>
        <name>substrate</name>
    </ligand>
</feature>
<feature type="binding site" evidence="1">
    <location>
        <position position="224"/>
    </location>
    <ligand>
        <name>FMN</name>
        <dbReference type="ChEBI" id="CHEBI:58210"/>
    </ligand>
</feature>
<feature type="binding site" evidence="1">
    <location>
        <position position="252"/>
    </location>
    <ligand>
        <name>FMN</name>
        <dbReference type="ChEBI" id="CHEBI:58210"/>
    </ligand>
</feature>
<feature type="binding site" evidence="1">
    <location>
        <begin position="253"/>
        <end position="254"/>
    </location>
    <ligand>
        <name>substrate</name>
    </ligand>
</feature>
<feature type="binding site" evidence="1">
    <location>
        <position position="275"/>
    </location>
    <ligand>
        <name>FMN</name>
        <dbReference type="ChEBI" id="CHEBI:58210"/>
    </ligand>
</feature>
<feature type="binding site" evidence="1">
    <location>
        <position position="304"/>
    </location>
    <ligand>
        <name>FMN</name>
        <dbReference type="ChEBI" id="CHEBI:58210"/>
    </ligand>
</feature>
<feature type="binding site" evidence="1">
    <location>
        <begin position="325"/>
        <end position="326"/>
    </location>
    <ligand>
        <name>FMN</name>
        <dbReference type="ChEBI" id="CHEBI:58210"/>
    </ligand>
</feature>
<dbReference type="EC" id="1.3.5.2" evidence="1"/>
<dbReference type="EMBL" id="CU207211">
    <property type="protein sequence ID" value="CAL62574.1"/>
    <property type="molecule type" value="Genomic_DNA"/>
</dbReference>
<dbReference type="SMR" id="A4G7T7"/>
<dbReference type="STRING" id="204773.HEAR2444"/>
<dbReference type="KEGG" id="har:HEAR2444"/>
<dbReference type="eggNOG" id="COG0167">
    <property type="taxonomic scope" value="Bacteria"/>
</dbReference>
<dbReference type="HOGENOM" id="CLU_013640_2_0_4"/>
<dbReference type="OrthoDB" id="9802377at2"/>
<dbReference type="UniPathway" id="UPA00070">
    <property type="reaction ID" value="UER00946"/>
</dbReference>
<dbReference type="Proteomes" id="UP000006697">
    <property type="component" value="Chromosome"/>
</dbReference>
<dbReference type="GO" id="GO:0005737">
    <property type="term" value="C:cytoplasm"/>
    <property type="evidence" value="ECO:0007669"/>
    <property type="project" value="InterPro"/>
</dbReference>
<dbReference type="GO" id="GO:0005886">
    <property type="term" value="C:plasma membrane"/>
    <property type="evidence" value="ECO:0007669"/>
    <property type="project" value="UniProtKB-SubCell"/>
</dbReference>
<dbReference type="GO" id="GO:0106430">
    <property type="term" value="F:dihydroorotate dehydrogenase (quinone) activity"/>
    <property type="evidence" value="ECO:0007669"/>
    <property type="project" value="UniProtKB-EC"/>
</dbReference>
<dbReference type="GO" id="GO:0006207">
    <property type="term" value="P:'de novo' pyrimidine nucleobase biosynthetic process"/>
    <property type="evidence" value="ECO:0007669"/>
    <property type="project" value="InterPro"/>
</dbReference>
<dbReference type="GO" id="GO:0044205">
    <property type="term" value="P:'de novo' UMP biosynthetic process"/>
    <property type="evidence" value="ECO:0007669"/>
    <property type="project" value="UniProtKB-UniRule"/>
</dbReference>
<dbReference type="CDD" id="cd04738">
    <property type="entry name" value="DHOD_2_like"/>
    <property type="match status" value="1"/>
</dbReference>
<dbReference type="FunFam" id="3.20.20.70:FF:000028">
    <property type="entry name" value="Dihydroorotate dehydrogenase (quinone)"/>
    <property type="match status" value="1"/>
</dbReference>
<dbReference type="Gene3D" id="3.20.20.70">
    <property type="entry name" value="Aldolase class I"/>
    <property type="match status" value="1"/>
</dbReference>
<dbReference type="HAMAP" id="MF_00225">
    <property type="entry name" value="DHO_dh_type2"/>
    <property type="match status" value="1"/>
</dbReference>
<dbReference type="InterPro" id="IPR013785">
    <property type="entry name" value="Aldolase_TIM"/>
</dbReference>
<dbReference type="InterPro" id="IPR050074">
    <property type="entry name" value="DHO_dehydrogenase"/>
</dbReference>
<dbReference type="InterPro" id="IPR012135">
    <property type="entry name" value="Dihydroorotate_DH_1_2"/>
</dbReference>
<dbReference type="InterPro" id="IPR005719">
    <property type="entry name" value="Dihydroorotate_DH_2"/>
</dbReference>
<dbReference type="InterPro" id="IPR005720">
    <property type="entry name" value="Dihydroorotate_DH_cat"/>
</dbReference>
<dbReference type="InterPro" id="IPR001295">
    <property type="entry name" value="Dihydroorotate_DH_CS"/>
</dbReference>
<dbReference type="NCBIfam" id="NF003644">
    <property type="entry name" value="PRK05286.1-1"/>
    <property type="match status" value="1"/>
</dbReference>
<dbReference type="NCBIfam" id="NF003645">
    <property type="entry name" value="PRK05286.1-2"/>
    <property type="match status" value="1"/>
</dbReference>
<dbReference type="NCBIfam" id="NF003646">
    <property type="entry name" value="PRK05286.1-4"/>
    <property type="match status" value="1"/>
</dbReference>
<dbReference type="NCBIfam" id="NF003652">
    <property type="entry name" value="PRK05286.2-5"/>
    <property type="match status" value="1"/>
</dbReference>
<dbReference type="NCBIfam" id="TIGR01036">
    <property type="entry name" value="pyrD_sub2"/>
    <property type="match status" value="1"/>
</dbReference>
<dbReference type="PANTHER" id="PTHR48109:SF4">
    <property type="entry name" value="DIHYDROOROTATE DEHYDROGENASE (QUINONE), MITOCHONDRIAL"/>
    <property type="match status" value="1"/>
</dbReference>
<dbReference type="PANTHER" id="PTHR48109">
    <property type="entry name" value="DIHYDROOROTATE DEHYDROGENASE (QUINONE), MITOCHONDRIAL-RELATED"/>
    <property type="match status" value="1"/>
</dbReference>
<dbReference type="Pfam" id="PF01180">
    <property type="entry name" value="DHO_dh"/>
    <property type="match status" value="1"/>
</dbReference>
<dbReference type="PIRSF" id="PIRSF000164">
    <property type="entry name" value="DHO_oxidase"/>
    <property type="match status" value="1"/>
</dbReference>
<dbReference type="SUPFAM" id="SSF51395">
    <property type="entry name" value="FMN-linked oxidoreductases"/>
    <property type="match status" value="1"/>
</dbReference>
<dbReference type="PROSITE" id="PS00911">
    <property type="entry name" value="DHODEHASE_1"/>
    <property type="match status" value="1"/>
</dbReference>
<dbReference type="PROSITE" id="PS00912">
    <property type="entry name" value="DHODEHASE_2"/>
    <property type="match status" value="1"/>
</dbReference>
<protein>
    <recommendedName>
        <fullName evidence="1">Dihydroorotate dehydrogenase (quinone)</fullName>
        <ecNumber evidence="1">1.3.5.2</ecNumber>
    </recommendedName>
    <alternativeName>
        <fullName evidence="1">DHOdehase</fullName>
        <shortName evidence="1">DHOD</shortName>
        <shortName evidence="1">DHODase</shortName>
    </alternativeName>
    <alternativeName>
        <fullName evidence="1">Dihydroorotate oxidase</fullName>
    </alternativeName>
</protein>
<sequence>MSEKFLYALARPFLFAIDPEAAHNLTLHALRRAASLGWTSAIAKPAHDPRTVMGITFPNPVGLAAGLDKDGAYIDGLATLGFGFIEVGTVTPHAQPGNPLPRMFRLPQANAIINRMGFNNGGVDAFVSNVQASRFYQNKEGILGLNIGKNADTPIERAVDDYLICLEKVYPYASYVTVNISSPNTKNLRQLQGASELDALLAQLKEAQQRLADQHQRYVPIALKIAPDIDTEQIQTIAQALLRHKMDGVIATNTTINREAVKNMKHAEEAGGLSGAPVFASSNAVIRALKAELGDALPIIGVGGILSGTDAQAKIAAGASLVQLYTGLIYRGPALIRECAAALRAPT</sequence>
<proteinExistence type="inferred from homology"/>
<gene>
    <name evidence="1" type="primary">pyrD</name>
    <name type="ordered locus">HEAR2444</name>
</gene>
<accession>A4G7T7</accession>